<reference key="1">
    <citation type="journal article" date="2004" name="Proc. Natl. Acad. Sci. U.S.A.">
        <title>Genome sequence of the enterobacterial phytopathogen Erwinia carotovora subsp. atroseptica and characterization of virulence factors.</title>
        <authorList>
            <person name="Bell K.S."/>
            <person name="Sebaihia M."/>
            <person name="Pritchard L."/>
            <person name="Holden M.T.G."/>
            <person name="Hyman L.J."/>
            <person name="Holeva M.C."/>
            <person name="Thomson N.R."/>
            <person name="Bentley S.D."/>
            <person name="Churcher L.J.C."/>
            <person name="Mungall K."/>
            <person name="Atkin R."/>
            <person name="Bason N."/>
            <person name="Brooks K."/>
            <person name="Chillingworth T."/>
            <person name="Clark K."/>
            <person name="Doggett J."/>
            <person name="Fraser A."/>
            <person name="Hance Z."/>
            <person name="Hauser H."/>
            <person name="Jagels K."/>
            <person name="Moule S."/>
            <person name="Norbertczak H."/>
            <person name="Ormond D."/>
            <person name="Price C."/>
            <person name="Quail M.A."/>
            <person name="Sanders M."/>
            <person name="Walker D."/>
            <person name="Whitehead S."/>
            <person name="Salmond G.P.C."/>
            <person name="Birch P.R.J."/>
            <person name="Parkhill J."/>
            <person name="Toth I.K."/>
        </authorList>
    </citation>
    <scope>NUCLEOTIDE SEQUENCE [LARGE SCALE GENOMIC DNA]</scope>
    <source>
        <strain>SCRI 1043 / ATCC BAA-672</strain>
    </source>
</reference>
<evidence type="ECO:0000255" key="1">
    <source>
        <dbReference type="HAMAP-Rule" id="MF_01377"/>
    </source>
</evidence>
<sequence>MEKNPITLLILNGKSAGNDELREAIGELRKDGYTLHVRVTWEYGDAKRYVEEAIQLKADNVIAAGGDGTVNEVAAALAVQPEAVRPCLGIVPLGTANDFATSCQIPMEMHNALTLAIKGRATAIDIAKVNDGHYFINMATGGFATRITTETPAKMKAALGSASYVLHALFRMDMLQAERCEIHGPDFHWSGDTLVIAVGNGRQAGGGQQLCPEALINDGLLELSVLSATELLPNMLQAWFTGSENQNMISATLPWLEISAPDDMTFNLDGEPLTAKRFRIEVLPAAIHCRLPPQCSLLE</sequence>
<gene>
    <name type="ordered locus">ECA3194</name>
</gene>
<dbReference type="EC" id="2.7.1.-" evidence="1"/>
<dbReference type="EMBL" id="BX950851">
    <property type="protein sequence ID" value="CAG76092.1"/>
    <property type="molecule type" value="Genomic_DNA"/>
</dbReference>
<dbReference type="RefSeq" id="WP_011094716.1">
    <property type="nucleotide sequence ID" value="NC_004547.2"/>
</dbReference>
<dbReference type="SMR" id="Q6D2A2"/>
<dbReference type="STRING" id="218491.ECA3194"/>
<dbReference type="KEGG" id="eca:ECA3194"/>
<dbReference type="PATRIC" id="fig|218491.5.peg.3236"/>
<dbReference type="eggNOG" id="COG1597">
    <property type="taxonomic scope" value="Bacteria"/>
</dbReference>
<dbReference type="HOGENOM" id="CLU_045532_1_1_6"/>
<dbReference type="OrthoDB" id="142078at2"/>
<dbReference type="Proteomes" id="UP000007966">
    <property type="component" value="Chromosome"/>
</dbReference>
<dbReference type="GO" id="GO:0005737">
    <property type="term" value="C:cytoplasm"/>
    <property type="evidence" value="ECO:0007669"/>
    <property type="project" value="UniProtKB-SubCell"/>
</dbReference>
<dbReference type="GO" id="GO:0005886">
    <property type="term" value="C:plasma membrane"/>
    <property type="evidence" value="ECO:0007669"/>
    <property type="project" value="TreeGrafter"/>
</dbReference>
<dbReference type="GO" id="GO:0005524">
    <property type="term" value="F:ATP binding"/>
    <property type="evidence" value="ECO:0007669"/>
    <property type="project" value="UniProtKB-UniRule"/>
</dbReference>
<dbReference type="GO" id="GO:0001727">
    <property type="term" value="F:lipid kinase activity"/>
    <property type="evidence" value="ECO:0007669"/>
    <property type="project" value="UniProtKB-UniRule"/>
</dbReference>
<dbReference type="GO" id="GO:0000287">
    <property type="term" value="F:magnesium ion binding"/>
    <property type="evidence" value="ECO:0007669"/>
    <property type="project" value="UniProtKB-UniRule"/>
</dbReference>
<dbReference type="GO" id="GO:0008654">
    <property type="term" value="P:phospholipid biosynthetic process"/>
    <property type="evidence" value="ECO:0007669"/>
    <property type="project" value="UniProtKB-UniRule"/>
</dbReference>
<dbReference type="Gene3D" id="2.60.200.40">
    <property type="match status" value="1"/>
</dbReference>
<dbReference type="Gene3D" id="3.40.50.10330">
    <property type="entry name" value="Probable inorganic polyphosphate/atp-NAD kinase, domain 1"/>
    <property type="match status" value="1"/>
</dbReference>
<dbReference type="HAMAP" id="MF_01377">
    <property type="entry name" value="YegS"/>
    <property type="match status" value="1"/>
</dbReference>
<dbReference type="InterPro" id="IPR017438">
    <property type="entry name" value="ATP-NAD_kinase_N"/>
</dbReference>
<dbReference type="InterPro" id="IPR005218">
    <property type="entry name" value="Diacylglycerol/lipid_kinase"/>
</dbReference>
<dbReference type="InterPro" id="IPR001206">
    <property type="entry name" value="Diacylglycerol_kinase_cat_dom"/>
</dbReference>
<dbReference type="InterPro" id="IPR022433">
    <property type="entry name" value="Lip_kinase_YegS"/>
</dbReference>
<dbReference type="InterPro" id="IPR050187">
    <property type="entry name" value="Lipid_Phosphate_FormReg"/>
</dbReference>
<dbReference type="InterPro" id="IPR016064">
    <property type="entry name" value="NAD/diacylglycerol_kinase_sf"/>
</dbReference>
<dbReference type="InterPro" id="IPR045540">
    <property type="entry name" value="YegS/DAGK_C"/>
</dbReference>
<dbReference type="NCBIfam" id="TIGR03702">
    <property type="entry name" value="lip_kinase_YegS"/>
    <property type="match status" value="1"/>
</dbReference>
<dbReference type="NCBIfam" id="NF009602">
    <property type="entry name" value="PRK13054.1"/>
    <property type="match status" value="1"/>
</dbReference>
<dbReference type="NCBIfam" id="TIGR00147">
    <property type="entry name" value="YegS/Rv2252/BmrU family lipid kinase"/>
    <property type="match status" value="1"/>
</dbReference>
<dbReference type="PANTHER" id="PTHR12358:SF106">
    <property type="entry name" value="LIPID KINASE YEGS"/>
    <property type="match status" value="1"/>
</dbReference>
<dbReference type="PANTHER" id="PTHR12358">
    <property type="entry name" value="SPHINGOSINE KINASE"/>
    <property type="match status" value="1"/>
</dbReference>
<dbReference type="Pfam" id="PF00781">
    <property type="entry name" value="DAGK_cat"/>
    <property type="match status" value="1"/>
</dbReference>
<dbReference type="Pfam" id="PF19279">
    <property type="entry name" value="YegS_C"/>
    <property type="match status" value="1"/>
</dbReference>
<dbReference type="SMART" id="SM00046">
    <property type="entry name" value="DAGKc"/>
    <property type="match status" value="1"/>
</dbReference>
<dbReference type="SUPFAM" id="SSF111331">
    <property type="entry name" value="NAD kinase/diacylglycerol kinase-like"/>
    <property type="match status" value="1"/>
</dbReference>
<dbReference type="PROSITE" id="PS50146">
    <property type="entry name" value="DAGK"/>
    <property type="match status" value="1"/>
</dbReference>
<accession>Q6D2A2</accession>
<organism>
    <name type="scientific">Pectobacterium atrosepticum (strain SCRI 1043 / ATCC BAA-672)</name>
    <name type="common">Erwinia carotovora subsp. atroseptica</name>
    <dbReference type="NCBI Taxonomy" id="218491"/>
    <lineage>
        <taxon>Bacteria</taxon>
        <taxon>Pseudomonadati</taxon>
        <taxon>Pseudomonadota</taxon>
        <taxon>Gammaproteobacteria</taxon>
        <taxon>Enterobacterales</taxon>
        <taxon>Pectobacteriaceae</taxon>
        <taxon>Pectobacterium</taxon>
    </lineage>
</organism>
<name>YEGS_PECAS</name>
<protein>
    <recommendedName>
        <fullName evidence="1">Probable lipid kinase YegS-like</fullName>
        <ecNumber evidence="1">2.7.1.-</ecNumber>
    </recommendedName>
</protein>
<proteinExistence type="inferred from homology"/>
<keyword id="KW-0067">ATP-binding</keyword>
<keyword id="KW-0963">Cytoplasm</keyword>
<keyword id="KW-0418">Kinase</keyword>
<keyword id="KW-0444">Lipid biosynthesis</keyword>
<keyword id="KW-0443">Lipid metabolism</keyword>
<keyword id="KW-0460">Magnesium</keyword>
<keyword id="KW-0479">Metal-binding</keyword>
<keyword id="KW-0547">Nucleotide-binding</keyword>
<keyword id="KW-0594">Phospholipid biosynthesis</keyword>
<keyword id="KW-1208">Phospholipid metabolism</keyword>
<keyword id="KW-1185">Reference proteome</keyword>
<keyword id="KW-0808">Transferase</keyword>
<comment type="function">
    <text evidence="1">Probably phosphorylates lipids; the in vivo substrate is unknown.</text>
</comment>
<comment type="cofactor">
    <cofactor evidence="1">
        <name>Mg(2+)</name>
        <dbReference type="ChEBI" id="CHEBI:18420"/>
    </cofactor>
    <cofactor evidence="1">
        <name>Ca(2+)</name>
        <dbReference type="ChEBI" id="CHEBI:29108"/>
    </cofactor>
    <text evidence="1">Binds 1 Mg(2+) ion per subunit. Ca(2+) may be able to substitute.</text>
</comment>
<comment type="subcellular location">
    <subcellularLocation>
        <location evidence="1">Cytoplasm</location>
    </subcellularLocation>
</comment>
<comment type="similarity">
    <text evidence="1">Belongs to the diacylglycerol/lipid kinase family. YegS lipid kinase subfamily.</text>
</comment>
<feature type="chain" id="PRO_0000292141" description="Probable lipid kinase YegS-like">
    <location>
        <begin position="1"/>
        <end position="299"/>
    </location>
</feature>
<feature type="domain" description="DAGKc" evidence="1">
    <location>
        <begin position="2"/>
        <end position="133"/>
    </location>
</feature>
<feature type="active site" description="Proton acceptor" evidence="1">
    <location>
        <position position="271"/>
    </location>
</feature>
<feature type="binding site" evidence="1">
    <location>
        <position position="40"/>
    </location>
    <ligand>
        <name>ATP</name>
        <dbReference type="ChEBI" id="CHEBI:30616"/>
    </ligand>
</feature>
<feature type="binding site" evidence="1">
    <location>
        <begin position="66"/>
        <end position="72"/>
    </location>
    <ligand>
        <name>ATP</name>
        <dbReference type="ChEBI" id="CHEBI:30616"/>
    </ligand>
</feature>
<feature type="binding site" evidence="1">
    <location>
        <position position="95"/>
    </location>
    <ligand>
        <name>ATP</name>
        <dbReference type="ChEBI" id="CHEBI:30616"/>
    </ligand>
</feature>
<feature type="binding site" evidence="1">
    <location>
        <position position="215"/>
    </location>
    <ligand>
        <name>Mg(2+)</name>
        <dbReference type="ChEBI" id="CHEBI:18420"/>
    </ligand>
</feature>
<feature type="binding site" evidence="1">
    <location>
        <position position="218"/>
    </location>
    <ligand>
        <name>Mg(2+)</name>
        <dbReference type="ChEBI" id="CHEBI:18420"/>
    </ligand>
</feature>
<feature type="binding site" evidence="1">
    <location>
        <position position="220"/>
    </location>
    <ligand>
        <name>Mg(2+)</name>
        <dbReference type="ChEBI" id="CHEBI:18420"/>
    </ligand>
</feature>